<accession>P63866</accession>
<accession>Q8XGH9</accession>
<proteinExistence type="inferred from homology"/>
<reference key="1">
    <citation type="journal article" date="2001" name="Nature">
        <title>Complete genome sequence of Salmonella enterica serovar Typhimurium LT2.</title>
        <authorList>
            <person name="McClelland M."/>
            <person name="Sanderson K.E."/>
            <person name="Spieth J."/>
            <person name="Clifton S.W."/>
            <person name="Latreille P."/>
            <person name="Courtney L."/>
            <person name="Porwollik S."/>
            <person name="Ali J."/>
            <person name="Dante M."/>
            <person name="Du F."/>
            <person name="Hou S."/>
            <person name="Layman D."/>
            <person name="Leonard S."/>
            <person name="Nguyen C."/>
            <person name="Scott K."/>
            <person name="Holmes A."/>
            <person name="Grewal N."/>
            <person name="Mulvaney E."/>
            <person name="Ryan E."/>
            <person name="Sun H."/>
            <person name="Florea L."/>
            <person name="Miller W."/>
            <person name="Stoneking T."/>
            <person name="Nhan M."/>
            <person name="Waterston R."/>
            <person name="Wilson R.K."/>
        </authorList>
    </citation>
    <scope>NUCLEOTIDE SEQUENCE [LARGE SCALE GENOMIC DNA]</scope>
    <source>
        <strain>LT2 / SGSC1412 / ATCC 700720</strain>
    </source>
</reference>
<protein>
    <recommendedName>
        <fullName evidence="1">Fluoride-specific ion channel FluC</fullName>
    </recommendedName>
</protein>
<name>FLUC_SALTY</name>
<sequence length="127" mass="13849">MLQLLLAVFIGGGTGSVARWMLSMRFNPLHQAIPIGTLTANLLGAFIIGMGFAWFNRMTHIDPMWKVLITTGFCGGLTTFSTFSAEVVFLLQEGRFGWALLNVLINLLGSFAMTALAFWLFSAAAAR</sequence>
<organism>
    <name type="scientific">Salmonella typhimurium (strain LT2 / SGSC1412 / ATCC 700720)</name>
    <dbReference type="NCBI Taxonomy" id="99287"/>
    <lineage>
        <taxon>Bacteria</taxon>
        <taxon>Pseudomonadati</taxon>
        <taxon>Pseudomonadota</taxon>
        <taxon>Gammaproteobacteria</taxon>
        <taxon>Enterobacterales</taxon>
        <taxon>Enterobacteriaceae</taxon>
        <taxon>Salmonella</taxon>
    </lineage>
</organism>
<evidence type="ECO:0000255" key="1">
    <source>
        <dbReference type="HAMAP-Rule" id="MF_00454"/>
    </source>
</evidence>
<feature type="chain" id="PRO_0000110169" description="Fluoride-specific ion channel FluC">
    <location>
        <begin position="1"/>
        <end position="127"/>
    </location>
</feature>
<feature type="transmembrane region" description="Helical" evidence="1">
    <location>
        <begin position="4"/>
        <end position="24"/>
    </location>
</feature>
<feature type="transmembrane region" description="Helical" evidence="1">
    <location>
        <begin position="35"/>
        <end position="55"/>
    </location>
</feature>
<feature type="transmembrane region" description="Helical" evidence="1">
    <location>
        <begin position="71"/>
        <end position="91"/>
    </location>
</feature>
<feature type="transmembrane region" description="Helical" evidence="1">
    <location>
        <begin position="103"/>
        <end position="123"/>
    </location>
</feature>
<feature type="binding site" evidence="1">
    <location>
        <position position="75"/>
    </location>
    <ligand>
        <name>Na(+)</name>
        <dbReference type="ChEBI" id="CHEBI:29101"/>
        <note>structural</note>
    </ligand>
</feature>
<feature type="binding site" evidence="1">
    <location>
        <position position="78"/>
    </location>
    <ligand>
        <name>Na(+)</name>
        <dbReference type="ChEBI" id="CHEBI:29101"/>
        <note>structural</note>
    </ligand>
</feature>
<gene>
    <name evidence="1" type="primary">fluC</name>
    <name evidence="1" type="synonym">crcB</name>
    <name type="ordered locus">STM0630</name>
</gene>
<dbReference type="EMBL" id="AE006468">
    <property type="protein sequence ID" value="AAL19581.1"/>
    <property type="molecule type" value="Genomic_DNA"/>
</dbReference>
<dbReference type="RefSeq" id="NP_459622.1">
    <property type="nucleotide sequence ID" value="NC_003197.2"/>
</dbReference>
<dbReference type="RefSeq" id="WP_000939753.1">
    <property type="nucleotide sequence ID" value="NC_003197.2"/>
</dbReference>
<dbReference type="SMR" id="P63866"/>
<dbReference type="STRING" id="99287.STM0630"/>
<dbReference type="PaxDb" id="99287-STM0630"/>
<dbReference type="GeneID" id="1252150"/>
<dbReference type="KEGG" id="stm:STM0630"/>
<dbReference type="PATRIC" id="fig|99287.12.peg.664"/>
<dbReference type="HOGENOM" id="CLU_114342_3_3_6"/>
<dbReference type="OMA" id="NDKWLNG"/>
<dbReference type="PhylomeDB" id="P63866"/>
<dbReference type="BioCyc" id="SENT99287:STM0630-MONOMER"/>
<dbReference type="Proteomes" id="UP000001014">
    <property type="component" value="Chromosome"/>
</dbReference>
<dbReference type="GO" id="GO:0005886">
    <property type="term" value="C:plasma membrane"/>
    <property type="evidence" value="ECO:0000318"/>
    <property type="project" value="GO_Central"/>
</dbReference>
<dbReference type="GO" id="GO:0062054">
    <property type="term" value="F:fluoride channel activity"/>
    <property type="evidence" value="ECO:0007669"/>
    <property type="project" value="UniProtKB-UniRule"/>
</dbReference>
<dbReference type="GO" id="GO:1903425">
    <property type="term" value="F:fluoride transmembrane transporter activity"/>
    <property type="evidence" value="ECO:0000318"/>
    <property type="project" value="GO_Central"/>
</dbReference>
<dbReference type="GO" id="GO:0046872">
    <property type="term" value="F:metal ion binding"/>
    <property type="evidence" value="ECO:0007669"/>
    <property type="project" value="UniProtKB-KW"/>
</dbReference>
<dbReference type="GO" id="GO:0140114">
    <property type="term" value="P:cellular detoxification of fluoride"/>
    <property type="evidence" value="ECO:0007669"/>
    <property type="project" value="UniProtKB-UniRule"/>
</dbReference>
<dbReference type="GO" id="GO:1903424">
    <property type="term" value="P:fluoride transmembrane transport"/>
    <property type="evidence" value="ECO:0000318"/>
    <property type="project" value="GO_Central"/>
</dbReference>
<dbReference type="HAMAP" id="MF_00454">
    <property type="entry name" value="FluC"/>
    <property type="match status" value="1"/>
</dbReference>
<dbReference type="InterPro" id="IPR003691">
    <property type="entry name" value="FluC"/>
</dbReference>
<dbReference type="NCBIfam" id="TIGR00494">
    <property type="entry name" value="crcB"/>
    <property type="match status" value="1"/>
</dbReference>
<dbReference type="NCBIfam" id="NF010792">
    <property type="entry name" value="PRK14196.1"/>
    <property type="match status" value="1"/>
</dbReference>
<dbReference type="PANTHER" id="PTHR28259">
    <property type="entry name" value="FLUORIDE EXPORT PROTEIN 1-RELATED"/>
    <property type="match status" value="1"/>
</dbReference>
<dbReference type="PANTHER" id="PTHR28259:SF1">
    <property type="entry name" value="FLUORIDE EXPORT PROTEIN 1-RELATED"/>
    <property type="match status" value="1"/>
</dbReference>
<dbReference type="Pfam" id="PF02537">
    <property type="entry name" value="CRCB"/>
    <property type="match status" value="1"/>
</dbReference>
<comment type="function">
    <text evidence="1">Fluoride-specific ion channel. Important for reducing fluoride concentration in the cell, thus reducing its toxicity.</text>
</comment>
<comment type="catalytic activity">
    <reaction evidence="1">
        <text>fluoride(in) = fluoride(out)</text>
        <dbReference type="Rhea" id="RHEA:76159"/>
        <dbReference type="ChEBI" id="CHEBI:17051"/>
    </reaction>
    <physiologicalReaction direction="left-to-right" evidence="1">
        <dbReference type="Rhea" id="RHEA:76160"/>
    </physiologicalReaction>
</comment>
<comment type="activity regulation">
    <text evidence="1">Na(+) is not transported, but it plays an essential structural role and its presence is essential for fluoride channel function.</text>
</comment>
<comment type="subcellular location">
    <subcellularLocation>
        <location evidence="1">Cell inner membrane</location>
        <topology evidence="1">Multi-pass membrane protein</topology>
    </subcellularLocation>
</comment>
<comment type="similarity">
    <text evidence="1">Belongs to the fluoride channel Fluc/FEX (TC 1.A.43) family.</text>
</comment>
<keyword id="KW-0997">Cell inner membrane</keyword>
<keyword id="KW-1003">Cell membrane</keyword>
<keyword id="KW-0407">Ion channel</keyword>
<keyword id="KW-0406">Ion transport</keyword>
<keyword id="KW-0472">Membrane</keyword>
<keyword id="KW-0479">Metal-binding</keyword>
<keyword id="KW-1185">Reference proteome</keyword>
<keyword id="KW-0915">Sodium</keyword>
<keyword id="KW-0812">Transmembrane</keyword>
<keyword id="KW-1133">Transmembrane helix</keyword>
<keyword id="KW-0813">Transport</keyword>